<protein>
    <recommendedName>
        <fullName evidence="1">Ribosomal RNA small subunit methyltransferase C</fullName>
        <ecNumber evidence="1">2.1.1.172</ecNumber>
    </recommendedName>
    <alternativeName>
        <fullName evidence="1">16S rRNA m2G1207 methyltransferase</fullName>
    </alternativeName>
    <alternativeName>
        <fullName evidence="1">rRNA (guanine-N(2)-)-methyltransferase RsmC</fullName>
    </alternativeName>
</protein>
<evidence type="ECO:0000255" key="1">
    <source>
        <dbReference type="HAMAP-Rule" id="MF_01862"/>
    </source>
</evidence>
<gene>
    <name evidence="1" type="primary">rsmC</name>
    <name type="ordered locus">Patl_0079</name>
</gene>
<sequence length="343" mass="37221">MLSAASQVLLRSEELLEQGKWLLVNPTDGHVFSALSNPEVYGFHQFFDIYEQSIASAKAQGRDTQHQFVAAYDTDASFDGAVLYLPKAKAHGQMLLANIVACLKPGGTLLVVGENKGGIKSAAKLLTPYSDNVNKIDSARHCAMFAAVVDKPVASFDITKWQDVSEHQVADISFKVCSLPGVFSHGELDTGTQLLLDNIDRVVSGRILDFACGAGIIGCFAGLKNPQAQVVMSDVSALAIYCSQKSAELNGVKAQVIPSNGLGALTGKFAQVFTNPPFHTGIKTDYSVTEGFMQQLKNHLQDRGSLILVANKFLRYADELDKQFKSVQTLTETTKFSVYCCRR</sequence>
<name>RSMC_PSEA6</name>
<comment type="function">
    <text evidence="1">Specifically methylates the guanine in position 1207 of 16S rRNA in the 30S particle.</text>
</comment>
<comment type="catalytic activity">
    <reaction evidence="1">
        <text>guanosine(1207) in 16S rRNA + S-adenosyl-L-methionine = N(2)-methylguanosine(1207) in 16S rRNA + S-adenosyl-L-homocysteine + H(+)</text>
        <dbReference type="Rhea" id="RHEA:42736"/>
        <dbReference type="Rhea" id="RHEA-COMP:10213"/>
        <dbReference type="Rhea" id="RHEA-COMP:10214"/>
        <dbReference type="ChEBI" id="CHEBI:15378"/>
        <dbReference type="ChEBI" id="CHEBI:57856"/>
        <dbReference type="ChEBI" id="CHEBI:59789"/>
        <dbReference type="ChEBI" id="CHEBI:74269"/>
        <dbReference type="ChEBI" id="CHEBI:74481"/>
        <dbReference type="EC" id="2.1.1.172"/>
    </reaction>
</comment>
<comment type="subunit">
    <text evidence="1">Monomer.</text>
</comment>
<comment type="subcellular location">
    <subcellularLocation>
        <location evidence="1">Cytoplasm</location>
    </subcellularLocation>
</comment>
<comment type="similarity">
    <text evidence="1">Belongs to the methyltransferase superfamily. RsmC family.</text>
</comment>
<keyword id="KW-0963">Cytoplasm</keyword>
<keyword id="KW-0489">Methyltransferase</keyword>
<keyword id="KW-0698">rRNA processing</keyword>
<keyword id="KW-0949">S-adenosyl-L-methionine</keyword>
<keyword id="KW-0808">Transferase</keyword>
<dbReference type="EC" id="2.1.1.172" evidence="1"/>
<dbReference type="EMBL" id="CP000388">
    <property type="protein sequence ID" value="ABG38611.1"/>
    <property type="molecule type" value="Genomic_DNA"/>
</dbReference>
<dbReference type="RefSeq" id="WP_011573021.1">
    <property type="nucleotide sequence ID" value="NC_008228.1"/>
</dbReference>
<dbReference type="SMR" id="Q15ZS7"/>
<dbReference type="STRING" id="342610.Patl_0079"/>
<dbReference type="KEGG" id="pat:Patl_0079"/>
<dbReference type="eggNOG" id="COG2813">
    <property type="taxonomic scope" value="Bacteria"/>
</dbReference>
<dbReference type="HOGENOM" id="CLU_049581_0_0_6"/>
<dbReference type="OrthoDB" id="9816072at2"/>
<dbReference type="Proteomes" id="UP000001981">
    <property type="component" value="Chromosome"/>
</dbReference>
<dbReference type="GO" id="GO:0005737">
    <property type="term" value="C:cytoplasm"/>
    <property type="evidence" value="ECO:0007669"/>
    <property type="project" value="UniProtKB-SubCell"/>
</dbReference>
<dbReference type="GO" id="GO:0052914">
    <property type="term" value="F:16S rRNA (guanine(1207)-N(2))-methyltransferase activity"/>
    <property type="evidence" value="ECO:0007669"/>
    <property type="project" value="UniProtKB-EC"/>
</dbReference>
<dbReference type="CDD" id="cd02440">
    <property type="entry name" value="AdoMet_MTases"/>
    <property type="match status" value="1"/>
</dbReference>
<dbReference type="Gene3D" id="3.40.50.150">
    <property type="entry name" value="Vaccinia Virus protein VP39"/>
    <property type="match status" value="2"/>
</dbReference>
<dbReference type="HAMAP" id="MF_01862">
    <property type="entry name" value="16SrRNA_methyltr_C"/>
    <property type="match status" value="1"/>
</dbReference>
<dbReference type="InterPro" id="IPR013675">
    <property type="entry name" value="Mtase_sm_N"/>
</dbReference>
<dbReference type="InterPro" id="IPR023543">
    <property type="entry name" value="rRNA_ssu_MeTfrase_C"/>
</dbReference>
<dbReference type="InterPro" id="IPR046977">
    <property type="entry name" value="RsmC/RlmG"/>
</dbReference>
<dbReference type="InterPro" id="IPR029063">
    <property type="entry name" value="SAM-dependent_MTases_sf"/>
</dbReference>
<dbReference type="InterPro" id="IPR007848">
    <property type="entry name" value="Small_mtfrase_dom"/>
</dbReference>
<dbReference type="PANTHER" id="PTHR47816">
    <property type="entry name" value="RIBOSOMAL RNA SMALL SUBUNIT METHYLTRANSFERASE C"/>
    <property type="match status" value="1"/>
</dbReference>
<dbReference type="PANTHER" id="PTHR47816:SF4">
    <property type="entry name" value="RIBOSOMAL RNA SMALL SUBUNIT METHYLTRANSFERASE C"/>
    <property type="match status" value="1"/>
</dbReference>
<dbReference type="Pfam" id="PF05175">
    <property type="entry name" value="MTS"/>
    <property type="match status" value="1"/>
</dbReference>
<dbReference type="Pfam" id="PF08468">
    <property type="entry name" value="MTS_N"/>
    <property type="match status" value="1"/>
</dbReference>
<dbReference type="SUPFAM" id="SSF53335">
    <property type="entry name" value="S-adenosyl-L-methionine-dependent methyltransferases"/>
    <property type="match status" value="2"/>
</dbReference>
<feature type="chain" id="PRO_0000369732" description="Ribosomal RNA small subunit methyltransferase C">
    <location>
        <begin position="1"/>
        <end position="343"/>
    </location>
</feature>
<reference key="1">
    <citation type="submission" date="2006-06" db="EMBL/GenBank/DDBJ databases">
        <title>Complete sequence of Pseudoalteromonas atlantica T6c.</title>
        <authorList>
            <consortium name="US DOE Joint Genome Institute"/>
            <person name="Copeland A."/>
            <person name="Lucas S."/>
            <person name="Lapidus A."/>
            <person name="Barry K."/>
            <person name="Detter J.C."/>
            <person name="Glavina del Rio T."/>
            <person name="Hammon N."/>
            <person name="Israni S."/>
            <person name="Dalin E."/>
            <person name="Tice H."/>
            <person name="Pitluck S."/>
            <person name="Saunders E."/>
            <person name="Brettin T."/>
            <person name="Bruce D."/>
            <person name="Han C."/>
            <person name="Tapia R."/>
            <person name="Gilna P."/>
            <person name="Schmutz J."/>
            <person name="Larimer F."/>
            <person name="Land M."/>
            <person name="Hauser L."/>
            <person name="Kyrpides N."/>
            <person name="Kim E."/>
            <person name="Karls A.C."/>
            <person name="Bartlett D."/>
            <person name="Higgins B.P."/>
            <person name="Richardson P."/>
        </authorList>
    </citation>
    <scope>NUCLEOTIDE SEQUENCE [LARGE SCALE GENOMIC DNA]</scope>
    <source>
        <strain>T6c / ATCC BAA-1087</strain>
    </source>
</reference>
<organism>
    <name type="scientific">Pseudoalteromonas atlantica (strain T6c / ATCC BAA-1087)</name>
    <dbReference type="NCBI Taxonomy" id="3042615"/>
    <lineage>
        <taxon>Bacteria</taxon>
        <taxon>Pseudomonadati</taxon>
        <taxon>Pseudomonadota</taxon>
        <taxon>Gammaproteobacteria</taxon>
        <taxon>Alteromonadales</taxon>
        <taxon>Alteromonadaceae</taxon>
        <taxon>Paraglaciecola</taxon>
    </lineage>
</organism>
<proteinExistence type="inferred from homology"/>
<accession>Q15ZS7</accession>